<accession>Q21059</accession>
<keyword id="KW-0165">Cleavage on pair of basic residues</keyword>
<keyword id="KW-0217">Developmental protein</keyword>
<keyword id="KW-1015">Disulfide bond</keyword>
<keyword id="KW-0245">EGF-like domain</keyword>
<keyword id="KW-0325">Glycoprotein</keyword>
<keyword id="KW-0378">Hydrolase</keyword>
<keyword id="KW-0479">Metal-binding</keyword>
<keyword id="KW-0482">Metalloprotease</keyword>
<keyword id="KW-0645">Protease</keyword>
<keyword id="KW-1185">Reference proteome</keyword>
<keyword id="KW-0964">Secreted</keyword>
<keyword id="KW-0732">Signal</keyword>
<keyword id="KW-0862">Zinc</keyword>
<keyword id="KW-0865">Zymogen</keyword>
<organism>
    <name type="scientific">Caenorhabditis elegans</name>
    <dbReference type="NCBI Taxonomy" id="6239"/>
    <lineage>
        <taxon>Eukaryota</taxon>
        <taxon>Metazoa</taxon>
        <taxon>Ecdysozoa</taxon>
        <taxon>Nematoda</taxon>
        <taxon>Chromadorea</taxon>
        <taxon>Rhabditida</taxon>
        <taxon>Rhabditina</taxon>
        <taxon>Rhabditomorpha</taxon>
        <taxon>Rhabditoidea</taxon>
        <taxon>Rhabditidae</taxon>
        <taxon>Peloderinae</taxon>
        <taxon>Caenorhabditis</taxon>
    </lineage>
</organism>
<dbReference type="EC" id="3.4.24.-" evidence="2"/>
<dbReference type="EMBL" id="D85744">
    <property type="protein sequence ID" value="BAA12861.1"/>
    <property type="molecule type" value="mRNA"/>
</dbReference>
<dbReference type="EMBL" id="Z69792">
    <property type="protein sequence ID" value="CAB61002.1"/>
    <property type="molecule type" value="Genomic_DNA"/>
</dbReference>
<dbReference type="PIR" id="S71630">
    <property type="entry name" value="S71630"/>
</dbReference>
<dbReference type="RefSeq" id="NP_510440.1">
    <property type="nucleotide sequence ID" value="NM_078039.7"/>
</dbReference>
<dbReference type="SMR" id="Q21059"/>
<dbReference type="BioGRID" id="46461">
    <property type="interactions" value="2"/>
</dbReference>
<dbReference type="STRING" id="6239.F40E10.1.1"/>
<dbReference type="MEROPS" id="M12.A25"/>
<dbReference type="GlyCosmos" id="Q21059">
    <property type="glycosylation" value="1 site, No reported glycans"/>
</dbReference>
<dbReference type="iPTMnet" id="Q21059"/>
<dbReference type="PaxDb" id="6239-F40E10.1"/>
<dbReference type="PeptideAtlas" id="Q21059"/>
<dbReference type="EnsemblMetazoa" id="F40E10.1.1">
    <property type="protein sequence ID" value="F40E10.1.1"/>
    <property type="gene ID" value="WBGene00001828"/>
</dbReference>
<dbReference type="GeneID" id="181564"/>
<dbReference type="KEGG" id="cel:CELE_F40E10.1"/>
<dbReference type="UCSC" id="F40E10.1">
    <property type="organism name" value="c. elegans"/>
</dbReference>
<dbReference type="AGR" id="WB:WBGene00001828"/>
<dbReference type="CTD" id="181564"/>
<dbReference type="WormBase" id="F40E10.1">
    <property type="protein sequence ID" value="CE24964"/>
    <property type="gene ID" value="WBGene00001828"/>
    <property type="gene designation" value="hch-1"/>
</dbReference>
<dbReference type="eggNOG" id="KOG3714">
    <property type="taxonomic scope" value="Eukaryota"/>
</dbReference>
<dbReference type="GeneTree" id="ENSGT00940000163716"/>
<dbReference type="HOGENOM" id="CLU_017286_1_4_1"/>
<dbReference type="InParanoid" id="Q21059"/>
<dbReference type="OMA" id="QYWARKS"/>
<dbReference type="OrthoDB" id="5913174at2759"/>
<dbReference type="PhylomeDB" id="Q21059"/>
<dbReference type="PRO" id="PR:Q21059"/>
<dbReference type="Proteomes" id="UP000001940">
    <property type="component" value="Chromosome X"/>
</dbReference>
<dbReference type="Bgee" id="WBGene00001828">
    <property type="expression patterns" value="Expressed in embryo and 5 other cell types or tissues"/>
</dbReference>
<dbReference type="GO" id="GO:0005576">
    <property type="term" value="C:extracellular region"/>
    <property type="evidence" value="ECO:0007669"/>
    <property type="project" value="UniProtKB-SubCell"/>
</dbReference>
<dbReference type="GO" id="GO:0004222">
    <property type="term" value="F:metalloendopeptidase activity"/>
    <property type="evidence" value="ECO:0000318"/>
    <property type="project" value="GO_Central"/>
</dbReference>
<dbReference type="GO" id="GO:0008270">
    <property type="term" value="F:zinc ion binding"/>
    <property type="evidence" value="ECO:0007669"/>
    <property type="project" value="InterPro"/>
</dbReference>
<dbReference type="GO" id="GO:0035188">
    <property type="term" value="P:hatching"/>
    <property type="evidence" value="ECO:0000315"/>
    <property type="project" value="WormBase"/>
</dbReference>
<dbReference type="GO" id="GO:0018996">
    <property type="term" value="P:molting cycle, collagen and cuticulin-based cuticle"/>
    <property type="evidence" value="ECO:0007669"/>
    <property type="project" value="InterPro"/>
</dbReference>
<dbReference type="GO" id="GO:0001764">
    <property type="term" value="P:neuron migration"/>
    <property type="evidence" value="ECO:0000315"/>
    <property type="project" value="WormBase"/>
</dbReference>
<dbReference type="GO" id="GO:0006508">
    <property type="term" value="P:proteolysis"/>
    <property type="evidence" value="ECO:0007669"/>
    <property type="project" value="UniProtKB-KW"/>
</dbReference>
<dbReference type="CDD" id="cd00041">
    <property type="entry name" value="CUB"/>
    <property type="match status" value="1"/>
</dbReference>
<dbReference type="CDD" id="cd04280">
    <property type="entry name" value="ZnMc_astacin_like"/>
    <property type="match status" value="1"/>
</dbReference>
<dbReference type="FunFam" id="3.40.390.10:FF:000084">
    <property type="entry name" value="Zinc metalloproteinase"/>
    <property type="match status" value="1"/>
</dbReference>
<dbReference type="Gene3D" id="3.40.390.10">
    <property type="entry name" value="Collagenase (Catalytic Domain)"/>
    <property type="match status" value="1"/>
</dbReference>
<dbReference type="Gene3D" id="2.60.120.290">
    <property type="entry name" value="Spermadhesin, CUB domain"/>
    <property type="match status" value="1"/>
</dbReference>
<dbReference type="InterPro" id="IPR034035">
    <property type="entry name" value="Astacin-like_dom"/>
</dbReference>
<dbReference type="InterPro" id="IPR000859">
    <property type="entry name" value="CUB_dom"/>
</dbReference>
<dbReference type="InterPro" id="IPR000742">
    <property type="entry name" value="EGF-like_dom"/>
</dbReference>
<dbReference type="InterPro" id="IPR024079">
    <property type="entry name" value="MetalloPept_cat_dom_sf"/>
</dbReference>
<dbReference type="InterPro" id="IPR017050">
    <property type="entry name" value="Metallopeptidase_nem"/>
</dbReference>
<dbReference type="InterPro" id="IPR001506">
    <property type="entry name" value="Peptidase_M12A"/>
</dbReference>
<dbReference type="InterPro" id="IPR006026">
    <property type="entry name" value="Peptidase_Metallo"/>
</dbReference>
<dbReference type="InterPro" id="IPR035914">
    <property type="entry name" value="Sperma_CUB_dom_sf"/>
</dbReference>
<dbReference type="InterPro" id="IPR000884">
    <property type="entry name" value="TSP1_rpt"/>
</dbReference>
<dbReference type="PANTHER" id="PTHR10127">
    <property type="entry name" value="DISCOIDIN, CUB, EGF, LAMININ , AND ZINC METALLOPROTEASE DOMAIN CONTAINING"/>
    <property type="match status" value="1"/>
</dbReference>
<dbReference type="PANTHER" id="PTHR10127:SF877">
    <property type="entry name" value="ZINC METALLOPROTEINASE NAS-34"/>
    <property type="match status" value="1"/>
</dbReference>
<dbReference type="Pfam" id="PF01400">
    <property type="entry name" value="Astacin"/>
    <property type="match status" value="1"/>
</dbReference>
<dbReference type="PIRSF" id="PIRSF036365">
    <property type="entry name" value="Astacin_nematoda"/>
    <property type="match status" value="1"/>
</dbReference>
<dbReference type="PRINTS" id="PR00480">
    <property type="entry name" value="ASTACIN"/>
</dbReference>
<dbReference type="SMART" id="SM00042">
    <property type="entry name" value="CUB"/>
    <property type="match status" value="1"/>
</dbReference>
<dbReference type="SMART" id="SM00235">
    <property type="entry name" value="ZnMc"/>
    <property type="match status" value="1"/>
</dbReference>
<dbReference type="SUPFAM" id="SSF55486">
    <property type="entry name" value="Metalloproteases ('zincins'), catalytic domain"/>
    <property type="match status" value="1"/>
</dbReference>
<dbReference type="SUPFAM" id="SSF49854">
    <property type="entry name" value="Spermadhesin, CUB domain"/>
    <property type="match status" value="1"/>
</dbReference>
<dbReference type="PROSITE" id="PS51864">
    <property type="entry name" value="ASTACIN"/>
    <property type="match status" value="1"/>
</dbReference>
<dbReference type="PROSITE" id="PS01180">
    <property type="entry name" value="CUB"/>
    <property type="match status" value="1"/>
</dbReference>
<dbReference type="PROSITE" id="PS00022">
    <property type="entry name" value="EGF_1"/>
    <property type="match status" value="1"/>
</dbReference>
<dbReference type="PROSITE" id="PS01186">
    <property type="entry name" value="EGF_2"/>
    <property type="match status" value="1"/>
</dbReference>
<dbReference type="PROSITE" id="PS50026">
    <property type="entry name" value="EGF_3"/>
    <property type="match status" value="1"/>
</dbReference>
<dbReference type="PROSITE" id="PS50092">
    <property type="entry name" value="TSP1"/>
    <property type="match status" value="1"/>
</dbReference>
<dbReference type="PROSITE" id="PS00142">
    <property type="entry name" value="ZINC_PROTEASE"/>
    <property type="match status" value="1"/>
</dbReference>
<proteinExistence type="evidence at protein level"/>
<evidence type="ECO:0000250" key="1"/>
<evidence type="ECO:0000250" key="2">
    <source>
        <dbReference type="UniProtKB" id="A8Q2D1"/>
    </source>
</evidence>
<evidence type="ECO:0000250" key="3">
    <source>
        <dbReference type="UniProtKB" id="P13497"/>
    </source>
</evidence>
<evidence type="ECO:0000255" key="4"/>
<evidence type="ECO:0000255" key="5">
    <source>
        <dbReference type="PROSITE-ProRule" id="PRU00059"/>
    </source>
</evidence>
<evidence type="ECO:0000255" key="6">
    <source>
        <dbReference type="PROSITE-ProRule" id="PRU00076"/>
    </source>
</evidence>
<evidence type="ECO:0000255" key="7">
    <source>
        <dbReference type="PROSITE-ProRule" id="PRU00210"/>
    </source>
</evidence>
<evidence type="ECO:0000255" key="8">
    <source>
        <dbReference type="PROSITE-ProRule" id="PRU01211"/>
    </source>
</evidence>
<evidence type="ECO:0000256" key="9">
    <source>
        <dbReference type="SAM" id="MobiDB-lite"/>
    </source>
</evidence>
<evidence type="ECO:0000269" key="10">
    <source>
    </source>
</evidence>
<evidence type="ECO:0000269" key="11">
    <source>
    </source>
</evidence>
<evidence type="ECO:0000305" key="12"/>
<sequence>MVSYWPVLIVLCLLPICHAKSYFADFVNGKGPFKQADALKFMDKMTILNKLQADILGIPQPDEFSALDFEDKIESKPDEIPYLFEGDMVLTDEQMDLIIKNVRDQYWARKSSTNEFLYAIRGKRSMTSFLSERWSFPVPYYIDTSSGVNTNAVLAGVAKWEQETCARFTRLNSYSSSSRQNALRFISGNGCYSNIGKVSRFPQDVSIGWGCTSLGTVCHEIGHALGFYHEQARYDRDDYVSILTQNIQDMYLSQFTKQSASSMVDYGVGYDYGSVMHYDQAAFSSTGGNTIATRDPNFQATIGQRVAPSFADVKRINFAYCNSTCSNYLDCQNGGYINPNDCNNCKCPPGFGGQLCDVAGTNSNGCGAGDITATSSIQTISASGALTCNYVIKAPVGAKVYFQMTAATFSRYSPCTTNYLEINYGRDFSRVGARFCASYPTISLSETNTLVVIYKGVNGARFSLNYRYDPVTFSTSAPTTTSTTTTTAPITVPTVSPTTTTTRQTTTTARTSTTTTTTQAPPTTTTSTSQCASWSACSAQCGGCGTQSRRCGTYVETVYCNTNPCTGGYCCRPFFYVTSFGTGYCRRPGADTPAAPQRYVEQRKG</sequence>
<feature type="signal peptide" evidence="4">
    <location>
        <begin position="1"/>
        <end position="19"/>
    </location>
</feature>
<feature type="propeptide" id="PRO_0000442681" evidence="3">
    <location>
        <begin position="20"/>
        <end position="124"/>
    </location>
</feature>
<feature type="chain" id="PRO_0000028938" description="Zinc metalloproteinase nas-34">
    <location>
        <begin position="125"/>
        <end position="605"/>
    </location>
</feature>
<feature type="domain" description="Peptidase M12A" evidence="8">
    <location>
        <begin position="124"/>
        <end position="322"/>
    </location>
</feature>
<feature type="domain" description="EGF-like" evidence="6">
    <location>
        <begin position="317"/>
        <end position="357"/>
    </location>
</feature>
<feature type="domain" description="CUB" evidence="5">
    <location>
        <begin position="366"/>
        <end position="469"/>
    </location>
</feature>
<feature type="domain" description="TSP type-1" evidence="7">
    <location>
        <begin position="525"/>
        <end position="566"/>
    </location>
</feature>
<feature type="region of interest" description="Disordered" evidence="9">
    <location>
        <begin position="479"/>
        <end position="526"/>
    </location>
</feature>
<feature type="active site" evidence="8">
    <location>
        <position position="220"/>
    </location>
</feature>
<feature type="binding site" evidence="8">
    <location>
        <position position="219"/>
    </location>
    <ligand>
        <name>Zn(2+)</name>
        <dbReference type="ChEBI" id="CHEBI:29105"/>
        <note>catalytic</note>
    </ligand>
</feature>
<feature type="binding site" evidence="8">
    <location>
        <position position="223"/>
    </location>
    <ligand>
        <name>Zn(2+)</name>
        <dbReference type="ChEBI" id="CHEBI:29105"/>
        <note>catalytic</note>
    </ligand>
</feature>
<feature type="binding site" evidence="8">
    <location>
        <position position="229"/>
    </location>
    <ligand>
        <name>Zn(2+)</name>
        <dbReference type="ChEBI" id="CHEBI:29105"/>
        <note>catalytic</note>
    </ligand>
</feature>
<feature type="glycosylation site" description="N-linked (GlcNAc...) asparagine" evidence="10">
    <location>
        <position position="322"/>
    </location>
</feature>
<feature type="disulfide bond" evidence="8">
    <location>
        <begin position="165"/>
        <end position="321"/>
    </location>
</feature>
<feature type="disulfide bond" evidence="8">
    <location>
        <begin position="191"/>
        <end position="211"/>
    </location>
</feature>
<feature type="disulfide bond" evidence="1">
    <location>
        <begin position="325"/>
        <end position="345"/>
    </location>
</feature>
<feature type="disulfide bond" evidence="1">
    <location>
        <begin position="347"/>
        <end position="356"/>
    </location>
</feature>
<feature type="disulfide bond" evidence="1">
    <location>
        <begin position="366"/>
        <end position="388"/>
    </location>
</feature>
<feature type="disulfide bond" evidence="1">
    <location>
        <begin position="415"/>
        <end position="436"/>
    </location>
</feature>
<feature type="disulfide bond" evidence="1">
    <location>
        <begin position="531"/>
        <end position="551"/>
    </location>
</feature>
<feature type="disulfide bond" evidence="1">
    <location>
        <begin position="537"/>
        <end position="560"/>
    </location>
</feature>
<feature type="disulfide bond" evidence="1">
    <location>
        <begin position="541"/>
        <end position="565"/>
    </location>
</feature>
<comment type="function">
    <text evidence="2 11">Metalloprotease (By similarity). Required for normal hatching and migration of neuroblasts. May act by degrading eggshell proteins at hatching (PubMed:8861940).</text>
</comment>
<comment type="cofactor">
    <cofactor evidence="8">
        <name>Zn(2+)</name>
        <dbReference type="ChEBI" id="CHEBI:29105"/>
    </cofactor>
    <text evidence="8">Binds 1 zinc ion per subunit.</text>
</comment>
<comment type="subcellular location">
    <subcellularLocation>
        <location evidence="12">Secreted</location>
    </subcellularLocation>
</comment>
<comment type="tissue specificity">
    <text evidence="11">Expressed in hypodermal cells. First expressed in the dorsal and lateral surface area of the middle and posterior region of embryos. At later stages, it localizes to lateral surface regions, probably corresponding to hypodermal seam cells. In L1 larvae, it is expressed in seam cells and in a few cells anterior to the nerve ring.</text>
</comment>
<comment type="developmental stage">
    <text evidence="11">In embryos, it is first expressed just before elongation.</text>
</comment>
<protein>
    <recommendedName>
        <fullName>Zinc metalloproteinase nas-34</fullName>
        <ecNumber evidence="2">3.4.24.-</ecNumber>
    </recommendedName>
    <alternativeName>
        <fullName>Defective hatching protein 1</fullName>
    </alternativeName>
    <alternativeName>
        <fullName>Nematode astacin 34</fullName>
    </alternativeName>
</protein>
<reference key="1">
    <citation type="journal article" date="1996" name="EMBO J.">
        <title>hch-1, a gene required for normal hatching and normal migration of a neuroblast in C. elegans, encodes a protein related to TOLLOID and BMP-1.</title>
        <authorList>
            <person name="Hishida R."/>
            <person name="Ishihara T."/>
            <person name="Kondo K."/>
            <person name="Katsura I."/>
        </authorList>
    </citation>
    <scope>NUCLEOTIDE SEQUENCE [MRNA]</scope>
    <scope>FUNCTION</scope>
    <scope>TISSUE SPECIFICITY</scope>
    <scope>DEVELOPMENTAL STAGE</scope>
    <source>
        <strain>Bristol N2</strain>
    </source>
</reference>
<reference key="2">
    <citation type="journal article" date="1998" name="Science">
        <title>Genome sequence of the nematode C. elegans: a platform for investigating biology.</title>
        <authorList>
            <consortium name="The C. elegans sequencing consortium"/>
        </authorList>
    </citation>
    <scope>NUCLEOTIDE SEQUENCE [LARGE SCALE GENOMIC DNA]</scope>
    <source>
        <strain>Bristol N2</strain>
    </source>
</reference>
<reference key="3">
    <citation type="journal article" date="2003" name="Eur. J. Biochem.">
        <title>The astacin protein family in Caenorhabditis elegans.</title>
        <authorList>
            <person name="Moehrlen F."/>
            <person name="Hutter H."/>
            <person name="Zwilling R."/>
        </authorList>
    </citation>
    <scope>NOMENCLATURE</scope>
</reference>
<reference key="4">
    <citation type="journal article" date="2007" name="Mol. Cell. Proteomics">
        <title>Proteomics reveals N-linked glycoprotein diversity in Caenorhabditis elegans and suggests an atypical translocation mechanism for integral membrane proteins.</title>
        <authorList>
            <person name="Kaji H."/>
            <person name="Kamiie J."/>
            <person name="Kawakami H."/>
            <person name="Kido K."/>
            <person name="Yamauchi Y."/>
            <person name="Shinkawa T."/>
            <person name="Taoka M."/>
            <person name="Takahashi N."/>
            <person name="Isobe T."/>
        </authorList>
    </citation>
    <scope>GLYCOSYLATION [LARGE SCALE ANALYSIS] AT ASN-322</scope>
    <scope>IDENTIFICATION BY MASS SPECTROMETRY</scope>
    <source>
        <strain>Bristol N2</strain>
    </source>
</reference>
<gene>
    <name type="primary">hch-1</name>
    <name type="synonym">nas-34</name>
    <name type="ORF">F40E10.1</name>
</gene>
<name>NAS34_CAEEL</name>